<sequence length="242" mass="26841">MATVSMRDMLKAGVHFGHQTRYWNPKMKPFIFGARNKVHIINLEQTVPMFNEALAELAKIGSKKGKVLFVGTKRAASEAVKEAAINSDQFYVNNRWLGGMLTNYKTVRQSIKRLKDFEVQSQDGTFEKLTKKEALMRTRDMEKLEKSLGGIKNMNGLPDALFVIDADHEHIAIKEANNLGIPVFAVVDTNSNPDGVDYIIPGNDDAIRAIQLYLNAAADAVKSGRNQDVAAVAEKDGFVEAE</sequence>
<gene>
    <name evidence="1" type="primary">rpsB</name>
    <name type="ordered locus">VF_1962</name>
</gene>
<dbReference type="EMBL" id="CP000020">
    <property type="protein sequence ID" value="AAW86457.1"/>
    <property type="molecule type" value="Genomic_DNA"/>
</dbReference>
<dbReference type="RefSeq" id="WP_005420558.1">
    <property type="nucleotide sequence ID" value="NZ_CAWLES010000001.1"/>
</dbReference>
<dbReference type="RefSeq" id="YP_205345.1">
    <property type="nucleotide sequence ID" value="NC_006840.2"/>
</dbReference>
<dbReference type="SMR" id="Q5E3D9"/>
<dbReference type="STRING" id="312309.VF_1962"/>
<dbReference type="EnsemblBacteria" id="AAW86457">
    <property type="protein sequence ID" value="AAW86457"/>
    <property type="gene ID" value="VF_1962"/>
</dbReference>
<dbReference type="GeneID" id="54164658"/>
<dbReference type="KEGG" id="vfi:VF_1962"/>
<dbReference type="PATRIC" id="fig|312309.11.peg.1989"/>
<dbReference type="eggNOG" id="COG0052">
    <property type="taxonomic scope" value="Bacteria"/>
</dbReference>
<dbReference type="HOGENOM" id="CLU_040318_1_2_6"/>
<dbReference type="OrthoDB" id="9808036at2"/>
<dbReference type="Proteomes" id="UP000000537">
    <property type="component" value="Chromosome I"/>
</dbReference>
<dbReference type="GO" id="GO:0022627">
    <property type="term" value="C:cytosolic small ribosomal subunit"/>
    <property type="evidence" value="ECO:0007669"/>
    <property type="project" value="TreeGrafter"/>
</dbReference>
<dbReference type="GO" id="GO:0003735">
    <property type="term" value="F:structural constituent of ribosome"/>
    <property type="evidence" value="ECO:0007669"/>
    <property type="project" value="InterPro"/>
</dbReference>
<dbReference type="GO" id="GO:0006412">
    <property type="term" value="P:translation"/>
    <property type="evidence" value="ECO:0007669"/>
    <property type="project" value="UniProtKB-UniRule"/>
</dbReference>
<dbReference type="CDD" id="cd01425">
    <property type="entry name" value="RPS2"/>
    <property type="match status" value="1"/>
</dbReference>
<dbReference type="FunFam" id="1.10.287.610:FF:000001">
    <property type="entry name" value="30S ribosomal protein S2"/>
    <property type="match status" value="1"/>
</dbReference>
<dbReference type="Gene3D" id="3.40.50.10490">
    <property type="entry name" value="Glucose-6-phosphate isomerase like protein, domain 1"/>
    <property type="match status" value="1"/>
</dbReference>
<dbReference type="Gene3D" id="1.10.287.610">
    <property type="entry name" value="Helix hairpin bin"/>
    <property type="match status" value="1"/>
</dbReference>
<dbReference type="HAMAP" id="MF_00291_B">
    <property type="entry name" value="Ribosomal_uS2_B"/>
    <property type="match status" value="1"/>
</dbReference>
<dbReference type="InterPro" id="IPR001865">
    <property type="entry name" value="Ribosomal_uS2"/>
</dbReference>
<dbReference type="InterPro" id="IPR005706">
    <property type="entry name" value="Ribosomal_uS2_bac/mit/plastid"/>
</dbReference>
<dbReference type="InterPro" id="IPR018130">
    <property type="entry name" value="Ribosomal_uS2_CS"/>
</dbReference>
<dbReference type="InterPro" id="IPR023591">
    <property type="entry name" value="Ribosomal_uS2_flav_dom_sf"/>
</dbReference>
<dbReference type="NCBIfam" id="TIGR01011">
    <property type="entry name" value="rpsB_bact"/>
    <property type="match status" value="1"/>
</dbReference>
<dbReference type="PANTHER" id="PTHR12534">
    <property type="entry name" value="30S RIBOSOMAL PROTEIN S2 PROKARYOTIC AND ORGANELLAR"/>
    <property type="match status" value="1"/>
</dbReference>
<dbReference type="PANTHER" id="PTHR12534:SF0">
    <property type="entry name" value="SMALL RIBOSOMAL SUBUNIT PROTEIN US2M"/>
    <property type="match status" value="1"/>
</dbReference>
<dbReference type="Pfam" id="PF00318">
    <property type="entry name" value="Ribosomal_S2"/>
    <property type="match status" value="1"/>
</dbReference>
<dbReference type="PRINTS" id="PR00395">
    <property type="entry name" value="RIBOSOMALS2"/>
</dbReference>
<dbReference type="SUPFAM" id="SSF52313">
    <property type="entry name" value="Ribosomal protein S2"/>
    <property type="match status" value="1"/>
</dbReference>
<dbReference type="PROSITE" id="PS00962">
    <property type="entry name" value="RIBOSOMAL_S2_1"/>
    <property type="match status" value="1"/>
</dbReference>
<dbReference type="PROSITE" id="PS00963">
    <property type="entry name" value="RIBOSOMAL_S2_2"/>
    <property type="match status" value="1"/>
</dbReference>
<organism>
    <name type="scientific">Aliivibrio fischeri (strain ATCC 700601 / ES114)</name>
    <name type="common">Vibrio fischeri</name>
    <dbReference type="NCBI Taxonomy" id="312309"/>
    <lineage>
        <taxon>Bacteria</taxon>
        <taxon>Pseudomonadati</taxon>
        <taxon>Pseudomonadota</taxon>
        <taxon>Gammaproteobacteria</taxon>
        <taxon>Vibrionales</taxon>
        <taxon>Vibrionaceae</taxon>
        <taxon>Aliivibrio</taxon>
    </lineage>
</organism>
<accession>Q5E3D9</accession>
<evidence type="ECO:0000255" key="1">
    <source>
        <dbReference type="HAMAP-Rule" id="MF_00291"/>
    </source>
</evidence>
<evidence type="ECO:0000305" key="2"/>
<reference key="1">
    <citation type="journal article" date="2005" name="Proc. Natl. Acad. Sci. U.S.A.">
        <title>Complete genome sequence of Vibrio fischeri: a symbiotic bacterium with pathogenic congeners.</title>
        <authorList>
            <person name="Ruby E.G."/>
            <person name="Urbanowski M."/>
            <person name="Campbell J."/>
            <person name="Dunn A."/>
            <person name="Faini M."/>
            <person name="Gunsalus R."/>
            <person name="Lostroh P."/>
            <person name="Lupp C."/>
            <person name="McCann J."/>
            <person name="Millikan D."/>
            <person name="Schaefer A."/>
            <person name="Stabb E."/>
            <person name="Stevens A."/>
            <person name="Visick K."/>
            <person name="Whistler C."/>
            <person name="Greenberg E.P."/>
        </authorList>
    </citation>
    <scope>NUCLEOTIDE SEQUENCE [LARGE SCALE GENOMIC DNA]</scope>
    <source>
        <strain>ATCC 700601 / ES114</strain>
    </source>
</reference>
<protein>
    <recommendedName>
        <fullName evidence="1">Small ribosomal subunit protein uS2</fullName>
    </recommendedName>
    <alternativeName>
        <fullName evidence="2">30S ribosomal protein S2</fullName>
    </alternativeName>
</protein>
<feature type="chain" id="PRO_1000004112" description="Small ribosomal subunit protein uS2">
    <location>
        <begin position="1"/>
        <end position="242"/>
    </location>
</feature>
<comment type="similarity">
    <text evidence="1">Belongs to the universal ribosomal protein uS2 family.</text>
</comment>
<name>RS2_ALIF1</name>
<proteinExistence type="inferred from homology"/>
<keyword id="KW-1185">Reference proteome</keyword>
<keyword id="KW-0687">Ribonucleoprotein</keyword>
<keyword id="KW-0689">Ribosomal protein</keyword>